<accession>Q4UEQ6</accession>
<proteinExistence type="inferred from homology"/>
<evidence type="ECO:0000255" key="1"/>
<evidence type="ECO:0000305" key="2"/>
<keyword id="KW-0472">Membrane</keyword>
<keyword id="KW-1185">Reference proteome</keyword>
<keyword id="KW-0732">Signal</keyword>
<keyword id="KW-0812">Transmembrane</keyword>
<keyword id="KW-1133">Transmembrane helix</keyword>
<reference key="1">
    <citation type="journal article" date="2005" name="Science">
        <title>Genome of the host-cell transforming parasite Theileria annulata compared with T. parva.</title>
        <authorList>
            <person name="Pain A."/>
            <person name="Renauld H."/>
            <person name="Berriman M."/>
            <person name="Murphy L."/>
            <person name="Yeats C.A."/>
            <person name="Weir W."/>
            <person name="Kerhornou A."/>
            <person name="Aslett M."/>
            <person name="Bishop R."/>
            <person name="Bouchier C."/>
            <person name="Cochet M."/>
            <person name="Coulson R.M.R."/>
            <person name="Cronin A."/>
            <person name="de Villiers E.P."/>
            <person name="Fraser A."/>
            <person name="Fosker N."/>
            <person name="Gardner M."/>
            <person name="Goble A."/>
            <person name="Griffiths-Jones S."/>
            <person name="Harris D.E."/>
            <person name="Katzer F."/>
            <person name="Larke N."/>
            <person name="Lord A."/>
            <person name="Maser P."/>
            <person name="McKellar S."/>
            <person name="Mooney P."/>
            <person name="Morton F."/>
            <person name="Nene V."/>
            <person name="O'Neil S."/>
            <person name="Price C."/>
            <person name="Quail M.A."/>
            <person name="Rabbinowitsch E."/>
            <person name="Rawlings N.D."/>
            <person name="Rutter S."/>
            <person name="Saunders D."/>
            <person name="Seeger K."/>
            <person name="Shah T."/>
            <person name="Squares R."/>
            <person name="Squares S."/>
            <person name="Tivey A."/>
            <person name="Walker A.R."/>
            <person name="Woodward J."/>
            <person name="Dobbelaere D.A.E."/>
            <person name="Langsley G."/>
            <person name="Rajandream M.A."/>
            <person name="McKeever D."/>
            <person name="Shiels B."/>
            <person name="Tait A."/>
            <person name="Barrell B.G."/>
            <person name="Hall N."/>
        </authorList>
    </citation>
    <scope>NUCLEOTIDE SEQUENCE [LARGE SCALE GENOMIC DNA]</scope>
    <source>
        <strain>Ankara</strain>
    </source>
</reference>
<feature type="signal peptide" evidence="1">
    <location>
        <begin position="1"/>
        <end position="19"/>
    </location>
</feature>
<feature type="chain" id="PRO_0000232715" description="23 kDa piroplasm membrane protein">
    <location>
        <begin position="20"/>
        <end position="229"/>
    </location>
</feature>
<feature type="topological domain" description="Extracellular" evidence="1">
    <location>
        <begin position="20"/>
        <end position="203"/>
    </location>
</feature>
<feature type="transmembrane region" description="Helical" evidence="1">
    <location>
        <begin position="204"/>
        <end position="224"/>
    </location>
</feature>
<feature type="topological domain" description="Cytoplasmic" evidence="1">
    <location>
        <begin position="225"/>
        <end position="229"/>
    </location>
</feature>
<name>P23_THEAN</name>
<dbReference type="EMBL" id="CR940348">
    <property type="protein sequence ID" value="CAI74433.1"/>
    <property type="molecule type" value="Genomic_DNA"/>
</dbReference>
<dbReference type="RefSeq" id="XP_952165.1">
    <property type="nucleotide sequence ID" value="XM_947072.1"/>
</dbReference>
<dbReference type="SMR" id="Q4UEQ6"/>
<dbReference type="GeneID" id="3861799"/>
<dbReference type="KEGG" id="tan:TA13810"/>
<dbReference type="VEuPathDB" id="PiroplasmaDB:TA13810"/>
<dbReference type="eggNOG" id="ENOG502QXG2">
    <property type="taxonomic scope" value="Eukaryota"/>
</dbReference>
<dbReference type="InParanoid" id="Q4UEQ6"/>
<dbReference type="OMA" id="LIFGQAT"/>
<dbReference type="OrthoDB" id="360601at2759"/>
<dbReference type="Proteomes" id="UP000001950">
    <property type="component" value="Chromosome 2"/>
</dbReference>
<dbReference type="GO" id="GO:0016020">
    <property type="term" value="C:membrane"/>
    <property type="evidence" value="ECO:0007669"/>
    <property type="project" value="UniProtKB-SubCell"/>
</dbReference>
<comment type="subcellular location">
    <subcellularLocation>
        <location evidence="2">Membrane</location>
        <topology evidence="2">Single-pass membrane protein</topology>
    </subcellularLocation>
</comment>
<gene>
    <name type="ORF">TA13810</name>
</gene>
<organism>
    <name type="scientific">Theileria annulata</name>
    <dbReference type="NCBI Taxonomy" id="5874"/>
    <lineage>
        <taxon>Eukaryota</taxon>
        <taxon>Sar</taxon>
        <taxon>Alveolata</taxon>
        <taxon>Apicomplexa</taxon>
        <taxon>Aconoidasida</taxon>
        <taxon>Piroplasmida</taxon>
        <taxon>Theileriidae</taxon>
        <taxon>Theileria</taxon>
    </lineage>
</organism>
<sequence length="229" mass="26822">MNKYFKVFFFVLLTHALKSSLIFGQATLQKGLSLDIDKDSTATDRLVVKHLDSDKQGYKVYTFKKEGWEYVNVKHVYFGERLLRVGRDNDMRCDFVHYVKVFWKGDVAPFFIKMNYYNWAWVSTRLHFKLNPDLTWTEVTVLTLDENAEQGFTTLFKQKLDEFASQVGDDVLAKYKPFVDDPNKKRFDLKATDEKEETSKKKYVLMVVVVVVFVVVASLVVFLVKFCLK</sequence>
<protein>
    <recommendedName>
        <fullName>23 kDa piroplasm membrane protein</fullName>
    </recommendedName>
    <alternativeName>
        <fullName>p23</fullName>
    </alternativeName>
</protein>